<protein>
    <recommendedName>
        <fullName evidence="1">ATP phosphoribosyltransferase</fullName>
        <shortName evidence="1">ATP-PRT</shortName>
        <shortName evidence="1">ATP-PRTase</shortName>
        <ecNumber evidence="1">2.4.2.17</ecNumber>
    </recommendedName>
</protein>
<organism>
    <name type="scientific">Picosynechococcus sp. (strain ATCC 27264 / PCC 7002 / PR-6)</name>
    <name type="common">Agmenellum quadruplicatum</name>
    <dbReference type="NCBI Taxonomy" id="32049"/>
    <lineage>
        <taxon>Bacteria</taxon>
        <taxon>Bacillati</taxon>
        <taxon>Cyanobacteriota</taxon>
        <taxon>Cyanophyceae</taxon>
        <taxon>Oscillatoriophycideae</taxon>
        <taxon>Chroococcales</taxon>
        <taxon>Geminocystaceae</taxon>
        <taxon>Picosynechococcus</taxon>
    </lineage>
</organism>
<feature type="chain" id="PRO_1000135292" description="ATP phosphoribosyltransferase">
    <location>
        <begin position="1"/>
        <end position="210"/>
    </location>
</feature>
<proteinExistence type="inferred from homology"/>
<evidence type="ECO:0000255" key="1">
    <source>
        <dbReference type="HAMAP-Rule" id="MF_01018"/>
    </source>
</evidence>
<comment type="function">
    <text evidence="1">Catalyzes the condensation of ATP and 5-phosphoribose 1-diphosphate to form N'-(5'-phosphoribosyl)-ATP (PR-ATP). Has a crucial role in the pathway because the rate of histidine biosynthesis seems to be controlled primarily by regulation of HisG enzymatic activity.</text>
</comment>
<comment type="catalytic activity">
    <reaction evidence="1">
        <text>1-(5-phospho-beta-D-ribosyl)-ATP + diphosphate = 5-phospho-alpha-D-ribose 1-diphosphate + ATP</text>
        <dbReference type="Rhea" id="RHEA:18473"/>
        <dbReference type="ChEBI" id="CHEBI:30616"/>
        <dbReference type="ChEBI" id="CHEBI:33019"/>
        <dbReference type="ChEBI" id="CHEBI:58017"/>
        <dbReference type="ChEBI" id="CHEBI:73183"/>
        <dbReference type="EC" id="2.4.2.17"/>
    </reaction>
</comment>
<comment type="pathway">
    <text evidence="1">Amino-acid biosynthesis; L-histidine biosynthesis; L-histidine from 5-phospho-alpha-D-ribose 1-diphosphate: step 1/9.</text>
</comment>
<comment type="subunit">
    <text evidence="1">Heteromultimer composed of HisG and HisZ subunits.</text>
</comment>
<comment type="subcellular location">
    <subcellularLocation>
        <location evidence="1">Cytoplasm</location>
    </subcellularLocation>
</comment>
<comment type="domain">
    <text>Lacks the C-terminal regulatory region which is replaced by HisZ.</text>
</comment>
<comment type="similarity">
    <text evidence="1">Belongs to the ATP phosphoribosyltransferase family. Short subfamily.</text>
</comment>
<accession>B1XPZ8</accession>
<reference key="1">
    <citation type="submission" date="2008-02" db="EMBL/GenBank/DDBJ databases">
        <title>Complete sequence of Synechococcus sp. PCC 7002.</title>
        <authorList>
            <person name="Li T."/>
            <person name="Zhao J."/>
            <person name="Zhao C."/>
            <person name="Liu Z."/>
            <person name="Zhao F."/>
            <person name="Marquardt J."/>
            <person name="Nomura C.T."/>
            <person name="Persson S."/>
            <person name="Detter J.C."/>
            <person name="Richardson P.M."/>
            <person name="Lanz C."/>
            <person name="Schuster S.C."/>
            <person name="Wang J."/>
            <person name="Li S."/>
            <person name="Huang X."/>
            <person name="Cai T."/>
            <person name="Yu Z."/>
            <person name="Luo J."/>
            <person name="Zhao J."/>
            <person name="Bryant D.A."/>
        </authorList>
    </citation>
    <scope>NUCLEOTIDE SEQUENCE [LARGE SCALE GENOMIC DNA]</scope>
    <source>
        <strain>ATCC 27264 / PCC 7002 / PR-6</strain>
    </source>
</reference>
<dbReference type="EC" id="2.4.2.17" evidence="1"/>
<dbReference type="EMBL" id="CP000951">
    <property type="protein sequence ID" value="ACA98626.1"/>
    <property type="molecule type" value="Genomic_DNA"/>
</dbReference>
<dbReference type="RefSeq" id="WP_012306250.1">
    <property type="nucleotide sequence ID" value="NC_010475.1"/>
</dbReference>
<dbReference type="SMR" id="B1XPZ8"/>
<dbReference type="STRING" id="32049.SYNPCC7002_A0620"/>
<dbReference type="KEGG" id="syp:SYNPCC7002_A0620"/>
<dbReference type="eggNOG" id="COG0040">
    <property type="taxonomic scope" value="Bacteria"/>
</dbReference>
<dbReference type="HOGENOM" id="CLU_038115_2_0_3"/>
<dbReference type="UniPathway" id="UPA00031">
    <property type="reaction ID" value="UER00006"/>
</dbReference>
<dbReference type="Proteomes" id="UP000001688">
    <property type="component" value="Chromosome"/>
</dbReference>
<dbReference type="GO" id="GO:0005737">
    <property type="term" value="C:cytoplasm"/>
    <property type="evidence" value="ECO:0007669"/>
    <property type="project" value="UniProtKB-SubCell"/>
</dbReference>
<dbReference type="GO" id="GO:0005524">
    <property type="term" value="F:ATP binding"/>
    <property type="evidence" value="ECO:0007669"/>
    <property type="project" value="UniProtKB-KW"/>
</dbReference>
<dbReference type="GO" id="GO:0003879">
    <property type="term" value="F:ATP phosphoribosyltransferase activity"/>
    <property type="evidence" value="ECO:0007669"/>
    <property type="project" value="UniProtKB-UniRule"/>
</dbReference>
<dbReference type="GO" id="GO:0000105">
    <property type="term" value="P:L-histidine biosynthetic process"/>
    <property type="evidence" value="ECO:0007669"/>
    <property type="project" value="UniProtKB-UniRule"/>
</dbReference>
<dbReference type="CDD" id="cd13595">
    <property type="entry name" value="PBP2_HisGs"/>
    <property type="match status" value="1"/>
</dbReference>
<dbReference type="FunFam" id="3.40.190.10:FF:000008">
    <property type="entry name" value="ATP phosphoribosyltransferase"/>
    <property type="match status" value="1"/>
</dbReference>
<dbReference type="Gene3D" id="3.40.190.10">
    <property type="entry name" value="Periplasmic binding protein-like II"/>
    <property type="match status" value="2"/>
</dbReference>
<dbReference type="HAMAP" id="MF_01018">
    <property type="entry name" value="HisG_Short"/>
    <property type="match status" value="1"/>
</dbReference>
<dbReference type="InterPro" id="IPR013820">
    <property type="entry name" value="ATP_PRibTrfase_cat"/>
</dbReference>
<dbReference type="InterPro" id="IPR018198">
    <property type="entry name" value="ATP_PRibTrfase_CS"/>
</dbReference>
<dbReference type="InterPro" id="IPR001348">
    <property type="entry name" value="ATP_PRibTrfase_HisG"/>
</dbReference>
<dbReference type="InterPro" id="IPR024893">
    <property type="entry name" value="ATP_PRibTrfase_HisG_short"/>
</dbReference>
<dbReference type="NCBIfam" id="TIGR00070">
    <property type="entry name" value="hisG"/>
    <property type="match status" value="1"/>
</dbReference>
<dbReference type="PANTHER" id="PTHR21403:SF8">
    <property type="entry name" value="ATP PHOSPHORIBOSYLTRANSFERASE"/>
    <property type="match status" value="1"/>
</dbReference>
<dbReference type="PANTHER" id="PTHR21403">
    <property type="entry name" value="ATP PHOSPHORIBOSYLTRANSFERASE ATP-PRTASE"/>
    <property type="match status" value="1"/>
</dbReference>
<dbReference type="Pfam" id="PF01634">
    <property type="entry name" value="HisG"/>
    <property type="match status" value="1"/>
</dbReference>
<dbReference type="SUPFAM" id="SSF53850">
    <property type="entry name" value="Periplasmic binding protein-like II"/>
    <property type="match status" value="1"/>
</dbReference>
<dbReference type="PROSITE" id="PS01316">
    <property type="entry name" value="ATP_P_PHORIBOSYLTR"/>
    <property type="match status" value="1"/>
</dbReference>
<gene>
    <name evidence="1" type="primary">hisG</name>
    <name type="ordered locus">SYNPCC7002_A0620</name>
</gene>
<keyword id="KW-0028">Amino-acid biosynthesis</keyword>
<keyword id="KW-0067">ATP-binding</keyword>
<keyword id="KW-0963">Cytoplasm</keyword>
<keyword id="KW-0328">Glycosyltransferase</keyword>
<keyword id="KW-0368">Histidine biosynthesis</keyword>
<keyword id="KW-0547">Nucleotide-binding</keyword>
<keyword id="KW-1185">Reference proteome</keyword>
<keyword id="KW-0808">Transferase</keyword>
<sequence>MLTIAIPKGGLLPEAIALLQQVGLDFSAFLDKKNRQLQITDPTGTARAMLVRTHDVPVYVEYGQAQLGFAGYDVLREKKPDVANLLDLGFGGCRLSVAVPKASPYKNPRQLPPNCRVASKFVNCAKDYFRDLDLPIEVIPLHGSVELGPITGMSEAIVDLVSTGNTLRENNLEEVEVLFHSTVRLIAHPTSYRANRHNMLDWVQKLEQIL</sequence>
<name>HIS1_PICP2</name>